<proteinExistence type="evidence at protein level"/>
<reference key="1">
    <citation type="submission" date="2007-02" db="EMBL/GenBank/DDBJ databases">
        <title>Complete sequence of Pyrobaculum calidifontis JCM 11548.</title>
        <authorList>
            <consortium name="US DOE Joint Genome Institute"/>
            <person name="Copeland A."/>
            <person name="Lucas S."/>
            <person name="Lapidus A."/>
            <person name="Barry K."/>
            <person name="Glavina del Rio T."/>
            <person name="Dalin E."/>
            <person name="Tice H."/>
            <person name="Pitluck S."/>
            <person name="Chain P."/>
            <person name="Malfatti S."/>
            <person name="Shin M."/>
            <person name="Vergez L."/>
            <person name="Schmutz J."/>
            <person name="Larimer F."/>
            <person name="Land M."/>
            <person name="Hauser L."/>
            <person name="Kyrpides N."/>
            <person name="Mikhailova N."/>
            <person name="Cozen A.E."/>
            <person name="Fitz-Gibbon S.T."/>
            <person name="House C.H."/>
            <person name="Saltikov C."/>
            <person name="Lowe T.M."/>
            <person name="Richardson P."/>
        </authorList>
    </citation>
    <scope>NUCLEOTIDE SEQUENCE [LARGE SCALE GENOMIC DNA]</scope>
    <source>
        <strain>DSM 21063 / JCM 11548 / VA1</strain>
    </source>
</reference>
<protein>
    <recommendedName>
        <fullName evidence="1">Large ribosomal subunit protein eL31</fullName>
    </recommendedName>
    <alternativeName>
        <fullName evidence="2">50S ribosomal protein L31e</fullName>
    </alternativeName>
</protein>
<sequence length="91" mass="10644">MSEEKKVVLTREYVINLRRTREVSRTKRAKYAVGLIRRFVARHLKVEPKAVKLGQALNEALWARSIEKPPRRVHVVVEKLDDGTVRVELKQ</sequence>
<evidence type="ECO:0000255" key="1">
    <source>
        <dbReference type="HAMAP-Rule" id="MF_00410"/>
    </source>
</evidence>
<evidence type="ECO:0000305" key="2"/>
<comment type="similarity">
    <text evidence="1">Belongs to the eukaryotic ribosomal protein eL31 family.</text>
</comment>
<feature type="chain" id="PRO_1000049921" description="Large ribosomal subunit protein eL31">
    <location>
        <begin position="1"/>
        <end position="91"/>
    </location>
</feature>
<gene>
    <name evidence="1" type="primary">rpl31e</name>
    <name type="ordered locus">Pcal_1825</name>
</gene>
<dbReference type="EMBL" id="CP000561">
    <property type="protein sequence ID" value="ABO09242.1"/>
    <property type="molecule type" value="Genomic_DNA"/>
</dbReference>
<dbReference type="RefSeq" id="WP_011850500.1">
    <property type="nucleotide sequence ID" value="NC_009073.1"/>
</dbReference>
<dbReference type="PDB" id="9E6Q">
    <property type="method" value="EM"/>
    <property type="resolution" value="1.95 A"/>
    <property type="chains" value="Aa=1-91"/>
</dbReference>
<dbReference type="PDB" id="9E71">
    <property type="method" value="EM"/>
    <property type="resolution" value="2.36 A"/>
    <property type="chains" value="Aa=1-91"/>
</dbReference>
<dbReference type="PDB" id="9E7F">
    <property type="method" value="EM"/>
    <property type="resolution" value="2.53 A"/>
    <property type="chains" value="Aa=1-91"/>
</dbReference>
<dbReference type="PDBsum" id="9E6Q"/>
<dbReference type="PDBsum" id="9E71"/>
<dbReference type="PDBsum" id="9E7F"/>
<dbReference type="EMDB" id="EMD-47578"/>
<dbReference type="EMDB" id="EMD-47628"/>
<dbReference type="EMDB" id="EMD-47668"/>
<dbReference type="SMR" id="A3MX75"/>
<dbReference type="STRING" id="410359.Pcal_1825"/>
<dbReference type="GeneID" id="4909538"/>
<dbReference type="KEGG" id="pcl:Pcal_1825"/>
<dbReference type="eggNOG" id="arCOG04473">
    <property type="taxonomic scope" value="Archaea"/>
</dbReference>
<dbReference type="HOGENOM" id="CLU_112570_3_1_2"/>
<dbReference type="OrthoDB" id="10127at2157"/>
<dbReference type="Proteomes" id="UP000001431">
    <property type="component" value="Chromosome"/>
</dbReference>
<dbReference type="GO" id="GO:0022625">
    <property type="term" value="C:cytosolic large ribosomal subunit"/>
    <property type="evidence" value="ECO:0007669"/>
    <property type="project" value="TreeGrafter"/>
</dbReference>
<dbReference type="GO" id="GO:0003735">
    <property type="term" value="F:structural constituent of ribosome"/>
    <property type="evidence" value="ECO:0007669"/>
    <property type="project" value="InterPro"/>
</dbReference>
<dbReference type="GO" id="GO:0002181">
    <property type="term" value="P:cytoplasmic translation"/>
    <property type="evidence" value="ECO:0007669"/>
    <property type="project" value="TreeGrafter"/>
</dbReference>
<dbReference type="CDD" id="cd00463">
    <property type="entry name" value="Ribosomal_L31e"/>
    <property type="match status" value="1"/>
</dbReference>
<dbReference type="Gene3D" id="3.10.440.10">
    <property type="match status" value="1"/>
</dbReference>
<dbReference type="HAMAP" id="MF_00410">
    <property type="entry name" value="Ribosomal_eL31"/>
    <property type="match status" value="1"/>
</dbReference>
<dbReference type="InterPro" id="IPR000054">
    <property type="entry name" value="Ribosomal_eL31"/>
</dbReference>
<dbReference type="InterPro" id="IPR020052">
    <property type="entry name" value="Ribosomal_eL31_CS"/>
</dbReference>
<dbReference type="InterPro" id="IPR023621">
    <property type="entry name" value="Ribosomal_eL31_dom_sf"/>
</dbReference>
<dbReference type="NCBIfam" id="NF002258">
    <property type="entry name" value="PRK01192.1-1"/>
    <property type="match status" value="1"/>
</dbReference>
<dbReference type="PANTHER" id="PTHR10956">
    <property type="entry name" value="60S RIBOSOMAL PROTEIN L31"/>
    <property type="match status" value="1"/>
</dbReference>
<dbReference type="PANTHER" id="PTHR10956:SF0">
    <property type="entry name" value="60S RIBOSOMAL PROTEIN L31"/>
    <property type="match status" value="1"/>
</dbReference>
<dbReference type="Pfam" id="PF01198">
    <property type="entry name" value="Ribosomal_L31e"/>
    <property type="match status" value="1"/>
</dbReference>
<dbReference type="SMART" id="SM01380">
    <property type="entry name" value="Ribosomal_L31e"/>
    <property type="match status" value="1"/>
</dbReference>
<dbReference type="SUPFAM" id="SSF54575">
    <property type="entry name" value="Ribosomal protein L31e"/>
    <property type="match status" value="1"/>
</dbReference>
<dbReference type="PROSITE" id="PS01144">
    <property type="entry name" value="RIBOSOMAL_L31E"/>
    <property type="match status" value="1"/>
</dbReference>
<organism>
    <name type="scientific">Pyrobaculum calidifontis (strain DSM 21063 / JCM 11548 / VA1)</name>
    <dbReference type="NCBI Taxonomy" id="410359"/>
    <lineage>
        <taxon>Archaea</taxon>
        <taxon>Thermoproteota</taxon>
        <taxon>Thermoprotei</taxon>
        <taxon>Thermoproteales</taxon>
        <taxon>Thermoproteaceae</taxon>
        <taxon>Pyrobaculum</taxon>
    </lineage>
</organism>
<name>RL31_PYRCJ</name>
<keyword id="KW-0002">3D-structure</keyword>
<keyword id="KW-0687">Ribonucleoprotein</keyword>
<keyword id="KW-0689">Ribosomal protein</keyword>
<accession>A3MX75</accession>